<comment type="function">
    <text evidence="1">Tetrapolymerization of the monopyrrole PBG into the hydroxymethylbilane pre-uroporphyrinogen in several discrete steps.</text>
</comment>
<comment type="catalytic activity">
    <reaction evidence="1">
        <text>4 porphobilinogen + H2O = hydroxymethylbilane + 4 NH4(+)</text>
        <dbReference type="Rhea" id="RHEA:13185"/>
        <dbReference type="ChEBI" id="CHEBI:15377"/>
        <dbReference type="ChEBI" id="CHEBI:28938"/>
        <dbReference type="ChEBI" id="CHEBI:57845"/>
        <dbReference type="ChEBI" id="CHEBI:58126"/>
        <dbReference type="EC" id="2.5.1.61"/>
    </reaction>
</comment>
<comment type="cofactor">
    <cofactor evidence="1">
        <name>dipyrromethane</name>
        <dbReference type="ChEBI" id="CHEBI:60342"/>
    </cofactor>
    <text evidence="1">Binds 1 dipyrromethane group covalently.</text>
</comment>
<comment type="pathway">
    <text evidence="1">Porphyrin-containing compound metabolism; protoporphyrin-IX biosynthesis; coproporphyrinogen-III from 5-aminolevulinate: step 2/4.</text>
</comment>
<comment type="subunit">
    <text evidence="1">Monomer.</text>
</comment>
<comment type="miscellaneous">
    <text evidence="1">The porphobilinogen subunits are added to the dipyrromethane group.</text>
</comment>
<comment type="similarity">
    <text evidence="1">Belongs to the HMBS family.</text>
</comment>
<feature type="chain" id="PRO_1000119220" description="Porphobilinogen deaminase">
    <location>
        <begin position="1"/>
        <end position="313"/>
    </location>
</feature>
<feature type="modified residue" description="S-(dipyrrolylmethanemethyl)cysteine" evidence="1">
    <location>
        <position position="242"/>
    </location>
</feature>
<protein>
    <recommendedName>
        <fullName evidence="1">Porphobilinogen deaminase</fullName>
        <shortName evidence="1">PBG</shortName>
        <ecNumber evidence="1">2.5.1.61</ecNumber>
    </recommendedName>
    <alternativeName>
        <fullName evidence="1">Hydroxymethylbilane synthase</fullName>
        <shortName evidence="1">HMBS</shortName>
    </alternativeName>
    <alternativeName>
        <fullName evidence="1">Pre-uroporphyrinogen synthase</fullName>
    </alternativeName>
</protein>
<proteinExistence type="inferred from homology"/>
<organism>
    <name type="scientific">Pseudomonas aeruginosa (strain LESB58)</name>
    <dbReference type="NCBI Taxonomy" id="557722"/>
    <lineage>
        <taxon>Bacteria</taxon>
        <taxon>Pseudomonadati</taxon>
        <taxon>Pseudomonadota</taxon>
        <taxon>Gammaproteobacteria</taxon>
        <taxon>Pseudomonadales</taxon>
        <taxon>Pseudomonadaceae</taxon>
        <taxon>Pseudomonas</taxon>
    </lineage>
</organism>
<keyword id="KW-0627">Porphyrin biosynthesis</keyword>
<keyword id="KW-0808">Transferase</keyword>
<name>HEM3_PSEA8</name>
<reference key="1">
    <citation type="journal article" date="2009" name="Genome Res.">
        <title>Newly introduced genomic prophage islands are critical determinants of in vivo competitiveness in the Liverpool epidemic strain of Pseudomonas aeruginosa.</title>
        <authorList>
            <person name="Winstanley C."/>
            <person name="Langille M.G.I."/>
            <person name="Fothergill J.L."/>
            <person name="Kukavica-Ibrulj I."/>
            <person name="Paradis-Bleau C."/>
            <person name="Sanschagrin F."/>
            <person name="Thomson N.R."/>
            <person name="Winsor G.L."/>
            <person name="Quail M.A."/>
            <person name="Lennard N."/>
            <person name="Bignell A."/>
            <person name="Clarke L."/>
            <person name="Seeger K."/>
            <person name="Saunders D."/>
            <person name="Harris D."/>
            <person name="Parkhill J."/>
            <person name="Hancock R.E.W."/>
            <person name="Brinkman F.S.L."/>
            <person name="Levesque R.C."/>
        </authorList>
    </citation>
    <scope>NUCLEOTIDE SEQUENCE [LARGE SCALE GENOMIC DNA]</scope>
    <source>
        <strain>LESB58</strain>
    </source>
</reference>
<dbReference type="EC" id="2.5.1.61" evidence="1"/>
<dbReference type="EMBL" id="FM209186">
    <property type="protein sequence ID" value="CAW30408.1"/>
    <property type="molecule type" value="Genomic_DNA"/>
</dbReference>
<dbReference type="RefSeq" id="WP_003114031.1">
    <property type="nucleotide sequence ID" value="NC_011770.1"/>
</dbReference>
<dbReference type="SMR" id="B7V5F0"/>
<dbReference type="KEGG" id="pag:PLES_56541"/>
<dbReference type="HOGENOM" id="CLU_019704_0_2_6"/>
<dbReference type="UniPathway" id="UPA00251">
    <property type="reaction ID" value="UER00319"/>
</dbReference>
<dbReference type="GO" id="GO:0005737">
    <property type="term" value="C:cytoplasm"/>
    <property type="evidence" value="ECO:0007669"/>
    <property type="project" value="TreeGrafter"/>
</dbReference>
<dbReference type="GO" id="GO:0004418">
    <property type="term" value="F:hydroxymethylbilane synthase activity"/>
    <property type="evidence" value="ECO:0007669"/>
    <property type="project" value="UniProtKB-UniRule"/>
</dbReference>
<dbReference type="GO" id="GO:0006782">
    <property type="term" value="P:protoporphyrinogen IX biosynthetic process"/>
    <property type="evidence" value="ECO:0007669"/>
    <property type="project" value="UniProtKB-UniRule"/>
</dbReference>
<dbReference type="CDD" id="cd13646">
    <property type="entry name" value="PBP2_EcHMBS_like"/>
    <property type="match status" value="1"/>
</dbReference>
<dbReference type="FunFam" id="3.30.160.40:FF:000002">
    <property type="entry name" value="Porphobilinogen deaminase"/>
    <property type="match status" value="1"/>
</dbReference>
<dbReference type="FunFam" id="3.40.190.10:FF:000004">
    <property type="entry name" value="Porphobilinogen deaminase"/>
    <property type="match status" value="1"/>
</dbReference>
<dbReference type="FunFam" id="3.40.190.10:FF:000005">
    <property type="entry name" value="Porphobilinogen deaminase"/>
    <property type="match status" value="1"/>
</dbReference>
<dbReference type="Gene3D" id="3.40.190.10">
    <property type="entry name" value="Periplasmic binding protein-like II"/>
    <property type="match status" value="2"/>
</dbReference>
<dbReference type="Gene3D" id="3.30.160.40">
    <property type="entry name" value="Porphobilinogen deaminase, C-terminal domain"/>
    <property type="match status" value="1"/>
</dbReference>
<dbReference type="HAMAP" id="MF_00260">
    <property type="entry name" value="Porphobil_deam"/>
    <property type="match status" value="1"/>
</dbReference>
<dbReference type="InterPro" id="IPR000860">
    <property type="entry name" value="HemC"/>
</dbReference>
<dbReference type="InterPro" id="IPR022419">
    <property type="entry name" value="Porphobilin_deaminase_cofac_BS"/>
</dbReference>
<dbReference type="InterPro" id="IPR022417">
    <property type="entry name" value="Porphobilin_deaminase_N"/>
</dbReference>
<dbReference type="InterPro" id="IPR022418">
    <property type="entry name" value="Porphobilinogen_deaminase_C"/>
</dbReference>
<dbReference type="InterPro" id="IPR036803">
    <property type="entry name" value="Porphobilinogen_deaminase_C_sf"/>
</dbReference>
<dbReference type="NCBIfam" id="TIGR00212">
    <property type="entry name" value="hemC"/>
    <property type="match status" value="1"/>
</dbReference>
<dbReference type="PANTHER" id="PTHR11557">
    <property type="entry name" value="PORPHOBILINOGEN DEAMINASE"/>
    <property type="match status" value="1"/>
</dbReference>
<dbReference type="PANTHER" id="PTHR11557:SF0">
    <property type="entry name" value="PORPHOBILINOGEN DEAMINASE"/>
    <property type="match status" value="1"/>
</dbReference>
<dbReference type="Pfam" id="PF01379">
    <property type="entry name" value="Porphobil_deam"/>
    <property type="match status" value="1"/>
</dbReference>
<dbReference type="Pfam" id="PF03900">
    <property type="entry name" value="Porphobil_deamC"/>
    <property type="match status" value="1"/>
</dbReference>
<dbReference type="PIRSF" id="PIRSF001438">
    <property type="entry name" value="4pyrrol_synth_OHMeBilane_synth"/>
    <property type="match status" value="1"/>
</dbReference>
<dbReference type="PRINTS" id="PR00151">
    <property type="entry name" value="PORPHBDMNASE"/>
</dbReference>
<dbReference type="SUPFAM" id="SSF53850">
    <property type="entry name" value="Periplasmic binding protein-like II"/>
    <property type="match status" value="1"/>
</dbReference>
<dbReference type="SUPFAM" id="SSF54782">
    <property type="entry name" value="Porphobilinogen deaminase (hydroxymethylbilane synthase), C-terminal domain"/>
    <property type="match status" value="1"/>
</dbReference>
<dbReference type="PROSITE" id="PS00533">
    <property type="entry name" value="PORPHOBILINOGEN_DEAM"/>
    <property type="match status" value="1"/>
</dbReference>
<sequence>MSSREIRIATRQSALALWQAEYVKARLEQAHPGLTVTLLPMTSRGDKLLDAPLAKIGGKGLFVKELETALLEGAADIAVHSMKDVPMDFPEGLGLYTICEREDPRDAFVSNTYASLEQLPAGSVVGTSSLRRQAQLLARRPDLQIRFLRGNVNTRLAKLDAGEYDAIILAAAGLIRLGFESRIRSSISVDDSLPAGGQGAVGIECRTADSDLHALLEPLHHTDTALRVTAERALNKRLNGGCQVPIACYAIREGDQLWLRGLVGQPDGTQLLRAEGRAPLAEAEALGVRVAEDLLEQGAEAILEAVYGEAGHP</sequence>
<accession>B7V5F0</accession>
<evidence type="ECO:0000255" key="1">
    <source>
        <dbReference type="HAMAP-Rule" id="MF_00260"/>
    </source>
</evidence>
<gene>
    <name evidence="1" type="primary">hemC</name>
    <name type="ordered locus">PLES_56541</name>
</gene>